<keyword id="KW-0997">Cell inner membrane</keyword>
<keyword id="KW-1003">Cell membrane</keyword>
<keyword id="KW-0472">Membrane</keyword>
<accession>A3N476</accession>
<dbReference type="EMBL" id="CP000570">
    <property type="protein sequence ID" value="ABN83703.1"/>
    <property type="molecule type" value="Genomic_DNA"/>
</dbReference>
<dbReference type="KEGG" id="bpd:BURPS668_0092"/>
<dbReference type="HOGENOM" id="CLU_144811_2_2_4"/>
<dbReference type="GO" id="GO:0005886">
    <property type="term" value="C:plasma membrane"/>
    <property type="evidence" value="ECO:0007669"/>
    <property type="project" value="UniProtKB-SubCell"/>
</dbReference>
<dbReference type="HAMAP" id="MF_00386">
    <property type="entry name" value="UPF0161_YidD"/>
    <property type="match status" value="1"/>
</dbReference>
<dbReference type="InterPro" id="IPR002696">
    <property type="entry name" value="Membr_insert_effic_factor_YidD"/>
</dbReference>
<dbReference type="NCBIfam" id="TIGR00278">
    <property type="entry name" value="membrane protein insertion efficiency factor YidD"/>
    <property type="match status" value="1"/>
</dbReference>
<dbReference type="PANTHER" id="PTHR33383">
    <property type="entry name" value="MEMBRANE PROTEIN INSERTION EFFICIENCY FACTOR-RELATED"/>
    <property type="match status" value="1"/>
</dbReference>
<dbReference type="PANTHER" id="PTHR33383:SF1">
    <property type="entry name" value="MEMBRANE PROTEIN INSERTION EFFICIENCY FACTOR-RELATED"/>
    <property type="match status" value="1"/>
</dbReference>
<dbReference type="Pfam" id="PF01809">
    <property type="entry name" value="YidD"/>
    <property type="match status" value="1"/>
</dbReference>
<dbReference type="SMART" id="SM01234">
    <property type="entry name" value="Haemolytic"/>
    <property type="match status" value="1"/>
</dbReference>
<sequence length="89" mass="9817">MQTVLIALLRFYKLAVSPLLGSRCRFYPSCSDYAREAIQYHGAARGTYLAARRLCRCHPFSAGGVDLVPPPNSDARNAPHEAEASSHRL</sequence>
<reference key="1">
    <citation type="journal article" date="2010" name="Genome Biol. Evol.">
        <title>Continuing evolution of Burkholderia mallei through genome reduction and large-scale rearrangements.</title>
        <authorList>
            <person name="Losada L."/>
            <person name="Ronning C.M."/>
            <person name="DeShazer D."/>
            <person name="Woods D."/>
            <person name="Fedorova N."/>
            <person name="Kim H.S."/>
            <person name="Shabalina S.A."/>
            <person name="Pearson T.R."/>
            <person name="Brinkac L."/>
            <person name="Tan P."/>
            <person name="Nandi T."/>
            <person name="Crabtree J."/>
            <person name="Badger J."/>
            <person name="Beckstrom-Sternberg S."/>
            <person name="Saqib M."/>
            <person name="Schutzer S.E."/>
            <person name="Keim P."/>
            <person name="Nierman W.C."/>
        </authorList>
    </citation>
    <scope>NUCLEOTIDE SEQUENCE [LARGE SCALE GENOMIC DNA]</scope>
    <source>
        <strain>668</strain>
    </source>
</reference>
<feature type="chain" id="PRO_1000013074" description="Putative membrane protein insertion efficiency factor">
    <location>
        <begin position="1"/>
        <end position="89"/>
    </location>
</feature>
<feature type="region of interest" description="Disordered" evidence="2">
    <location>
        <begin position="68"/>
        <end position="89"/>
    </location>
</feature>
<feature type="compositionally biased region" description="Basic and acidic residues" evidence="2">
    <location>
        <begin position="77"/>
        <end position="89"/>
    </location>
</feature>
<comment type="function">
    <text evidence="1">Could be involved in insertion of integral membrane proteins into the membrane.</text>
</comment>
<comment type="subcellular location">
    <subcellularLocation>
        <location evidence="1">Cell inner membrane</location>
        <topology evidence="1">Peripheral membrane protein</topology>
        <orientation evidence="1">Cytoplasmic side</orientation>
    </subcellularLocation>
</comment>
<comment type="similarity">
    <text evidence="1">Belongs to the UPF0161 family.</text>
</comment>
<name>YIDD_BURP6</name>
<proteinExistence type="inferred from homology"/>
<gene>
    <name type="ordered locus">BURPS668_0092</name>
</gene>
<protein>
    <recommendedName>
        <fullName evidence="1">Putative membrane protein insertion efficiency factor</fullName>
    </recommendedName>
</protein>
<evidence type="ECO:0000255" key="1">
    <source>
        <dbReference type="HAMAP-Rule" id="MF_00386"/>
    </source>
</evidence>
<evidence type="ECO:0000256" key="2">
    <source>
        <dbReference type="SAM" id="MobiDB-lite"/>
    </source>
</evidence>
<organism>
    <name type="scientific">Burkholderia pseudomallei (strain 668)</name>
    <dbReference type="NCBI Taxonomy" id="320373"/>
    <lineage>
        <taxon>Bacteria</taxon>
        <taxon>Pseudomonadati</taxon>
        <taxon>Pseudomonadota</taxon>
        <taxon>Betaproteobacteria</taxon>
        <taxon>Burkholderiales</taxon>
        <taxon>Burkholderiaceae</taxon>
        <taxon>Burkholderia</taxon>
        <taxon>pseudomallei group</taxon>
    </lineage>
</organism>